<accession>Q9WVB0</accession>
<accession>Q78HG1</accession>
<accession>Q9CPU5</accession>
<protein>
    <recommendedName>
        <fullName evidence="2">RNA-binding protein with multiple splicing</fullName>
        <shortName evidence="2">RBP-MS</shortName>
        <shortName evidence="2">RBPMS</shortName>
    </recommendedName>
    <alternativeName>
        <fullName evidence="5">Heart and RRM expressed sequence</fullName>
        <shortName evidence="5">Hermes</shortName>
    </alternativeName>
</protein>
<keyword id="KW-0007">Acetylation</keyword>
<keyword id="KW-0010">Activator</keyword>
<keyword id="KW-0025">Alternative splicing</keyword>
<keyword id="KW-0963">Cytoplasm</keyword>
<keyword id="KW-0539">Nucleus</keyword>
<keyword id="KW-0597">Phosphoprotein</keyword>
<keyword id="KW-1185">Reference proteome</keyword>
<keyword id="KW-0694">RNA-binding</keyword>
<keyword id="KW-0804">Transcription</keyword>
<keyword id="KW-0805">Transcription regulation</keyword>
<reference key="1">
    <citation type="journal article" date="1999" name="Mech. Dev.">
        <title>The RNA-binding protein gene, hermes, is expressed at high levels in the developing heart.</title>
        <authorList>
            <person name="Gerber W.V."/>
            <person name="Yatskievych T.A."/>
            <person name="Antin P.B."/>
            <person name="Correia K.M."/>
            <person name="Conlon R.A."/>
            <person name="Krieg P.A."/>
        </authorList>
    </citation>
    <scope>NUCLEOTIDE SEQUENCE [MRNA] (ISOFORM 1)</scope>
    <scope>DEVELOPMENTAL STAGE</scope>
    <scope>TISSUE SPECIFICITY</scope>
    <source>
        <tissue>Heart</tissue>
    </source>
</reference>
<reference key="2">
    <citation type="journal article" date="2005" name="Science">
        <title>The transcriptional landscape of the mammalian genome.</title>
        <authorList>
            <person name="Carninci P."/>
            <person name="Kasukawa T."/>
            <person name="Katayama S."/>
            <person name="Gough J."/>
            <person name="Frith M.C."/>
            <person name="Maeda N."/>
            <person name="Oyama R."/>
            <person name="Ravasi T."/>
            <person name="Lenhard B."/>
            <person name="Wells C."/>
            <person name="Kodzius R."/>
            <person name="Shimokawa K."/>
            <person name="Bajic V.B."/>
            <person name="Brenner S.E."/>
            <person name="Batalov S."/>
            <person name="Forrest A.R."/>
            <person name="Zavolan M."/>
            <person name="Davis M.J."/>
            <person name="Wilming L.G."/>
            <person name="Aidinis V."/>
            <person name="Allen J.E."/>
            <person name="Ambesi-Impiombato A."/>
            <person name="Apweiler R."/>
            <person name="Aturaliya R.N."/>
            <person name="Bailey T.L."/>
            <person name="Bansal M."/>
            <person name="Baxter L."/>
            <person name="Beisel K.W."/>
            <person name="Bersano T."/>
            <person name="Bono H."/>
            <person name="Chalk A.M."/>
            <person name="Chiu K.P."/>
            <person name="Choudhary V."/>
            <person name="Christoffels A."/>
            <person name="Clutterbuck D.R."/>
            <person name="Crowe M.L."/>
            <person name="Dalla E."/>
            <person name="Dalrymple B.P."/>
            <person name="de Bono B."/>
            <person name="Della Gatta G."/>
            <person name="di Bernardo D."/>
            <person name="Down T."/>
            <person name="Engstrom P."/>
            <person name="Fagiolini M."/>
            <person name="Faulkner G."/>
            <person name="Fletcher C.F."/>
            <person name="Fukushima T."/>
            <person name="Furuno M."/>
            <person name="Futaki S."/>
            <person name="Gariboldi M."/>
            <person name="Georgii-Hemming P."/>
            <person name="Gingeras T.R."/>
            <person name="Gojobori T."/>
            <person name="Green R.E."/>
            <person name="Gustincich S."/>
            <person name="Harbers M."/>
            <person name="Hayashi Y."/>
            <person name="Hensch T.K."/>
            <person name="Hirokawa N."/>
            <person name="Hill D."/>
            <person name="Huminiecki L."/>
            <person name="Iacono M."/>
            <person name="Ikeo K."/>
            <person name="Iwama A."/>
            <person name="Ishikawa T."/>
            <person name="Jakt M."/>
            <person name="Kanapin A."/>
            <person name="Katoh M."/>
            <person name="Kawasawa Y."/>
            <person name="Kelso J."/>
            <person name="Kitamura H."/>
            <person name="Kitano H."/>
            <person name="Kollias G."/>
            <person name="Krishnan S.P."/>
            <person name="Kruger A."/>
            <person name="Kummerfeld S.K."/>
            <person name="Kurochkin I.V."/>
            <person name="Lareau L.F."/>
            <person name="Lazarevic D."/>
            <person name="Lipovich L."/>
            <person name="Liu J."/>
            <person name="Liuni S."/>
            <person name="McWilliam S."/>
            <person name="Madan Babu M."/>
            <person name="Madera M."/>
            <person name="Marchionni L."/>
            <person name="Matsuda H."/>
            <person name="Matsuzawa S."/>
            <person name="Miki H."/>
            <person name="Mignone F."/>
            <person name="Miyake S."/>
            <person name="Morris K."/>
            <person name="Mottagui-Tabar S."/>
            <person name="Mulder N."/>
            <person name="Nakano N."/>
            <person name="Nakauchi H."/>
            <person name="Ng P."/>
            <person name="Nilsson R."/>
            <person name="Nishiguchi S."/>
            <person name="Nishikawa S."/>
            <person name="Nori F."/>
            <person name="Ohara O."/>
            <person name="Okazaki Y."/>
            <person name="Orlando V."/>
            <person name="Pang K.C."/>
            <person name="Pavan W.J."/>
            <person name="Pavesi G."/>
            <person name="Pesole G."/>
            <person name="Petrovsky N."/>
            <person name="Piazza S."/>
            <person name="Reed J."/>
            <person name="Reid J.F."/>
            <person name="Ring B.Z."/>
            <person name="Ringwald M."/>
            <person name="Rost B."/>
            <person name="Ruan Y."/>
            <person name="Salzberg S.L."/>
            <person name="Sandelin A."/>
            <person name="Schneider C."/>
            <person name="Schoenbach C."/>
            <person name="Sekiguchi K."/>
            <person name="Semple C.A."/>
            <person name="Seno S."/>
            <person name="Sessa L."/>
            <person name="Sheng Y."/>
            <person name="Shibata Y."/>
            <person name="Shimada H."/>
            <person name="Shimada K."/>
            <person name="Silva D."/>
            <person name="Sinclair B."/>
            <person name="Sperling S."/>
            <person name="Stupka E."/>
            <person name="Sugiura K."/>
            <person name="Sultana R."/>
            <person name="Takenaka Y."/>
            <person name="Taki K."/>
            <person name="Tammoja K."/>
            <person name="Tan S.L."/>
            <person name="Tang S."/>
            <person name="Taylor M.S."/>
            <person name="Tegner J."/>
            <person name="Teichmann S.A."/>
            <person name="Ueda H.R."/>
            <person name="van Nimwegen E."/>
            <person name="Verardo R."/>
            <person name="Wei C.L."/>
            <person name="Yagi K."/>
            <person name="Yamanishi H."/>
            <person name="Zabarovsky E."/>
            <person name="Zhu S."/>
            <person name="Zimmer A."/>
            <person name="Hide W."/>
            <person name="Bult C."/>
            <person name="Grimmond S.M."/>
            <person name="Teasdale R.D."/>
            <person name="Liu E.T."/>
            <person name="Brusic V."/>
            <person name="Quackenbush J."/>
            <person name="Wahlestedt C."/>
            <person name="Mattick J.S."/>
            <person name="Hume D.A."/>
            <person name="Kai C."/>
            <person name="Sasaki D."/>
            <person name="Tomaru Y."/>
            <person name="Fukuda S."/>
            <person name="Kanamori-Katayama M."/>
            <person name="Suzuki M."/>
            <person name="Aoki J."/>
            <person name="Arakawa T."/>
            <person name="Iida J."/>
            <person name="Imamura K."/>
            <person name="Itoh M."/>
            <person name="Kato T."/>
            <person name="Kawaji H."/>
            <person name="Kawagashira N."/>
            <person name="Kawashima T."/>
            <person name="Kojima M."/>
            <person name="Kondo S."/>
            <person name="Konno H."/>
            <person name="Nakano K."/>
            <person name="Ninomiya N."/>
            <person name="Nishio T."/>
            <person name="Okada M."/>
            <person name="Plessy C."/>
            <person name="Shibata K."/>
            <person name="Shiraki T."/>
            <person name="Suzuki S."/>
            <person name="Tagami M."/>
            <person name="Waki K."/>
            <person name="Watahiki A."/>
            <person name="Okamura-Oho Y."/>
            <person name="Suzuki H."/>
            <person name="Kawai J."/>
            <person name="Hayashizaki Y."/>
        </authorList>
    </citation>
    <scope>NUCLEOTIDE SEQUENCE [LARGE SCALE MRNA] (ISOFORMS 1 AND 2)</scope>
    <source>
        <strain>C57BL/6J</strain>
    </source>
</reference>
<reference key="3">
    <citation type="journal article" date="2009" name="PLoS Biol.">
        <title>Lineage-specific biology revealed by a finished genome assembly of the mouse.</title>
        <authorList>
            <person name="Church D.M."/>
            <person name="Goodstadt L."/>
            <person name="Hillier L.W."/>
            <person name="Zody M.C."/>
            <person name="Goldstein S."/>
            <person name="She X."/>
            <person name="Bult C.J."/>
            <person name="Agarwala R."/>
            <person name="Cherry J.L."/>
            <person name="DiCuccio M."/>
            <person name="Hlavina W."/>
            <person name="Kapustin Y."/>
            <person name="Meric P."/>
            <person name="Maglott D."/>
            <person name="Birtle Z."/>
            <person name="Marques A.C."/>
            <person name="Graves T."/>
            <person name="Zhou S."/>
            <person name="Teague B."/>
            <person name="Potamousis K."/>
            <person name="Churas C."/>
            <person name="Place M."/>
            <person name="Herschleb J."/>
            <person name="Runnheim R."/>
            <person name="Forrest D."/>
            <person name="Amos-Landgraf J."/>
            <person name="Schwartz D.C."/>
            <person name="Cheng Z."/>
            <person name="Lindblad-Toh K."/>
            <person name="Eichler E.E."/>
            <person name="Ponting C.P."/>
        </authorList>
    </citation>
    <scope>NUCLEOTIDE SEQUENCE [LARGE SCALE GENOMIC DNA]</scope>
    <source>
        <strain>C57BL/6J</strain>
    </source>
</reference>
<reference key="4">
    <citation type="journal article" date="2004" name="Genome Res.">
        <title>The status, quality, and expansion of the NIH full-length cDNA project: the Mammalian Gene Collection (MGC).</title>
        <authorList>
            <consortium name="The MGC Project Team"/>
        </authorList>
    </citation>
    <scope>NUCLEOTIDE SEQUENCE [LARGE SCALE MRNA] (ISOFORM 1)</scope>
    <source>
        <strain>FVB/N</strain>
        <tissue>Colon</tissue>
    </source>
</reference>
<reference key="5">
    <citation type="journal article" date="2010" name="Cell">
        <title>A tissue-specific atlas of mouse protein phosphorylation and expression.</title>
        <authorList>
            <person name="Huttlin E.L."/>
            <person name="Jedrychowski M.P."/>
            <person name="Elias J.E."/>
            <person name="Goswami T."/>
            <person name="Rad R."/>
            <person name="Beausoleil S.A."/>
            <person name="Villen J."/>
            <person name="Haas W."/>
            <person name="Sowa M.E."/>
            <person name="Gygi S.P."/>
        </authorList>
    </citation>
    <scope>PHOSPHORYLATION [LARGE SCALE ANALYSIS] AT THR-12</scope>
    <scope>IDENTIFICATION BY MASS SPECTROMETRY [LARGE SCALE ANALYSIS]</scope>
    <source>
        <tissue>Heart</tissue>
        <tissue>Kidney</tissue>
        <tissue>Liver</tissue>
        <tissue>Lung</tissue>
        <tissue>Spleen</tissue>
        <tissue>Testis</tissue>
    </source>
</reference>
<sequence length="197" mass="21816">MNGGGKAEKENTPSEANLQEEEVRTLFVSGLPLDIKPRELYLLFRPFKGYEGSLIKLTSKQPVGFVSFDSRSEAEAAKNALNGIRFDPEIPQTLRLEFAKANTKMAKNKLVGTPNPSTPLPNTVPQFIAREPYELTVPALYPSSPEVWAPYPLYPAELAPALPPPAAFTYPASLHAQMRWIPPSEATSQGWKSRQFC</sequence>
<organism>
    <name type="scientific">Mus musculus</name>
    <name type="common">Mouse</name>
    <dbReference type="NCBI Taxonomy" id="10090"/>
    <lineage>
        <taxon>Eukaryota</taxon>
        <taxon>Metazoa</taxon>
        <taxon>Chordata</taxon>
        <taxon>Craniata</taxon>
        <taxon>Vertebrata</taxon>
        <taxon>Euteleostomi</taxon>
        <taxon>Mammalia</taxon>
        <taxon>Eutheria</taxon>
        <taxon>Euarchontoglires</taxon>
        <taxon>Glires</taxon>
        <taxon>Rodentia</taxon>
        <taxon>Myomorpha</taxon>
        <taxon>Muroidea</taxon>
        <taxon>Muridae</taxon>
        <taxon>Murinae</taxon>
        <taxon>Mus</taxon>
        <taxon>Mus</taxon>
    </lineage>
</organism>
<gene>
    <name evidence="8" type="primary">Rbpms</name>
    <name type="synonym">Hermes</name>
</gene>
<comment type="function">
    <text evidence="1 2">RNA binding protein that mediates the regulation of pre-mRNA alternative splicing (AS) (By similarity). Acts either as activator (FLNB, HSPG2, LIPA1, MYOCD, PTPRF and PPFIBP1) or repressor (TPM1, ACTN1, ITGA7, PIEZO1, LSM14B, MBNL1 and MBML2) of splicing events on specific pre-mRNA targets. Together with RNA binding proteins RBFOX2 and MBNL1/2, activates a splicing program associated with differentiated contractile vascular smooth muscle cells (SMC) by regulating AS of numerous pre-mRNA involved in actin cytoskeleton and focal adhesion machineries, suggesting a role in promoting a cell differentiated state (By similarity). Binds to introns, exons and 3'-UTR associated with tandem CAC trinucleotide motifs separated by a variable spacer region, at a minimum as a dimer. The minimal length of RNA required for RBPMS-binding tandem CAC motifs is 15 nt, with spacing ranging from 1 to 9 nt. Can also bind to CA dinucleotide repeats (By similarity). Mediates repression of TPM1 exon 3 by binding to CAC tandem repeats in the flanking intronic regions, followed by higher-order oligomerization and heterotypic interactions with other splicing regulators including MBNL1 and RBFOX2, which prevents assembly of ATP-dependent splicing complexes (By similarity).</text>
</comment>
<comment type="subunit">
    <text evidence="1 2">Homodimer; each protein chain binds one RNA molecule via the external surface of the homodimer (By similarity). Interacts with RNA binding proteins MBNL1, RBFOX2, RBM4 and RBM14; the interaction allows cooperative assembly of stable cell-specific alternative splicing regulatory complexes. Also interacts with RBM47, MATR3 and ESRP2 (By similarity). Interacts with SMAD2, SMAD3 and SMAD4; the interactions are direct (By similarity).</text>
</comment>
<comment type="subcellular location">
    <subcellularLocation>
        <location evidence="2">Nucleus</location>
    </subcellularLocation>
    <subcellularLocation>
        <location evidence="2">Cytoplasm</location>
    </subcellularLocation>
    <subcellularLocation>
        <location evidence="2">Cytoplasm</location>
        <location evidence="2">Stress granule</location>
    </subcellularLocation>
    <subcellularLocation>
        <location evidence="2">Cytoplasm</location>
        <location evidence="2">P-body</location>
    </subcellularLocation>
</comment>
<comment type="alternative products">
    <event type="alternative splicing"/>
    <isoform>
        <id>Q9WVB0-1</id>
        <name>1</name>
        <sequence type="displayed"/>
    </isoform>
    <isoform>
        <id>Q9WVB0-2</id>
        <name>2</name>
        <sequence type="described" ref="VSP_045747"/>
    </isoform>
</comment>
<comment type="tissue specificity">
    <text evidence="4">mRNA expressed in developing heart, with significantly higher expression in the atria relative to the ventricles.</text>
</comment>
<comment type="developmental stage">
    <text evidence="4">mRNA already detected at 9.5 dpc.</text>
</comment>
<comment type="domain">
    <text evidence="2">The RNA recognition motif (RRM) domain mediates homodimerization. The RRM domain also mediates binding to tandem CAC trinucleotide motif-containing single-stranded RNA. The RRM domain is also necessary for interaction with SMAD4 and for TGFB1/Smad-mediated transactivation activity.</text>
</comment>
<comment type="domain">
    <text evidence="1">The C-terminal 20 amino acids region, without homology to other proteins, is essential for higher-order oligomerization. Also essential for RBPMS cooperative RNA binding.</text>
</comment>
<evidence type="ECO:0000250" key="1">
    <source>
        <dbReference type="UniProtKB" id="A0A8I6G705"/>
    </source>
</evidence>
<evidence type="ECO:0000250" key="2">
    <source>
        <dbReference type="UniProtKB" id="Q93062"/>
    </source>
</evidence>
<evidence type="ECO:0000255" key="3">
    <source>
        <dbReference type="PROSITE-ProRule" id="PRU00176"/>
    </source>
</evidence>
<evidence type="ECO:0000269" key="4">
    <source>
    </source>
</evidence>
<evidence type="ECO:0000303" key="5">
    <source>
    </source>
</evidence>
<evidence type="ECO:0000303" key="6">
    <source>
    </source>
</evidence>
<evidence type="ECO:0000305" key="7"/>
<evidence type="ECO:0000312" key="8">
    <source>
        <dbReference type="MGI" id="MGI:1334446"/>
    </source>
</evidence>
<evidence type="ECO:0007744" key="9">
    <source>
    </source>
</evidence>
<proteinExistence type="evidence at protein level"/>
<feature type="chain" id="PRO_0000081794" description="RNA-binding protein with multiple splicing">
    <location>
        <begin position="1"/>
        <end position="197"/>
    </location>
</feature>
<feature type="domain" description="RRM" evidence="3">
    <location>
        <begin position="24"/>
        <end position="101"/>
    </location>
</feature>
<feature type="region of interest" description="Interaction with RNA" evidence="2">
    <location>
        <begin position="98"/>
        <end position="105"/>
    </location>
</feature>
<feature type="site" description="Interaction with RNA" evidence="2">
    <location>
        <position position="27"/>
    </location>
</feature>
<feature type="site" description="Interaction with RNA" evidence="2">
    <location>
        <position position="61"/>
    </location>
</feature>
<feature type="modified residue" description="N-acetylmethionine" evidence="2">
    <location>
        <position position="1"/>
    </location>
</feature>
<feature type="modified residue" description="Phosphothreonine" evidence="9">
    <location>
        <position position="12"/>
    </location>
</feature>
<feature type="modified residue" description="Phosphothreonine" evidence="2">
    <location>
        <position position="113"/>
    </location>
</feature>
<feature type="splice variant" id="VSP_045747" description="In isoform 2." evidence="6">
    <original>MRWIPPSEATSQGWKSRQFC</original>
    <variation>CFSPEAKPNTPVFCPLLQQIRFVSGNVFVTYQPTADQQRELPC</variation>
    <location>
        <begin position="178"/>
        <end position="197"/>
    </location>
</feature>
<feature type="sequence conflict" description="In Ref. 1; AAD39515." evidence="7" ref="1">
    <original>L</original>
    <variation>I</variation>
    <location>
        <position position="96"/>
    </location>
</feature>
<feature type="sequence conflict" description="In Ref. 1; AAD39515." evidence="7" ref="1">
    <original>QFI</original>
    <variation>HSV</variation>
    <location>
        <begin position="126"/>
        <end position="128"/>
    </location>
</feature>
<dbReference type="EMBL" id="AF148511">
    <property type="protein sequence ID" value="AAD39515.1"/>
    <property type="molecule type" value="mRNA"/>
</dbReference>
<dbReference type="EMBL" id="AK012265">
    <property type="protein sequence ID" value="BAB28128.1"/>
    <property type="molecule type" value="mRNA"/>
</dbReference>
<dbReference type="EMBL" id="AK012586">
    <property type="protein sequence ID" value="BAB28336.1"/>
    <property type="molecule type" value="mRNA"/>
</dbReference>
<dbReference type="EMBL" id="AK041118">
    <property type="protein sequence ID" value="BAC30827.1"/>
    <property type="molecule type" value="mRNA"/>
</dbReference>
<dbReference type="EMBL" id="AC123616">
    <property type="status" value="NOT_ANNOTATED_CDS"/>
    <property type="molecule type" value="Genomic_DNA"/>
</dbReference>
<dbReference type="EMBL" id="AC127551">
    <property type="status" value="NOT_ANNOTATED_CDS"/>
    <property type="molecule type" value="Genomic_DNA"/>
</dbReference>
<dbReference type="EMBL" id="AC162523">
    <property type="status" value="NOT_ANNOTATED_CDS"/>
    <property type="molecule type" value="Genomic_DNA"/>
</dbReference>
<dbReference type="EMBL" id="BC030397">
    <property type="protein sequence ID" value="AAH30397.1"/>
    <property type="molecule type" value="mRNA"/>
</dbReference>
<dbReference type="CCDS" id="CCDS40317.1">
    <molecule id="Q9WVB0-1"/>
</dbReference>
<dbReference type="CCDS" id="CCDS40318.1">
    <molecule id="Q9WVB0-2"/>
</dbReference>
<dbReference type="RefSeq" id="NP_001036139.1">
    <molecule id="Q9WVB0-1"/>
    <property type="nucleotide sequence ID" value="NM_001042674.2"/>
</dbReference>
<dbReference type="RefSeq" id="NP_001036140.1">
    <molecule id="Q9WVB0-2"/>
    <property type="nucleotide sequence ID" value="NM_001042675.2"/>
</dbReference>
<dbReference type="RefSeq" id="NP_062707.1">
    <molecule id="Q9WVB0-1"/>
    <property type="nucleotide sequence ID" value="NM_019733.3"/>
</dbReference>
<dbReference type="BMRB" id="Q9WVB0"/>
<dbReference type="SMR" id="Q9WVB0"/>
<dbReference type="BioGRID" id="202831">
    <property type="interactions" value="4"/>
</dbReference>
<dbReference type="FunCoup" id="Q9WVB0">
    <property type="interactions" value="1325"/>
</dbReference>
<dbReference type="STRING" id="10090.ENSMUSP00000033995"/>
<dbReference type="iPTMnet" id="Q9WVB0"/>
<dbReference type="PhosphoSitePlus" id="Q9WVB0"/>
<dbReference type="jPOST" id="Q9WVB0"/>
<dbReference type="PaxDb" id="10090-ENSMUSP00000033995"/>
<dbReference type="ProteomicsDB" id="255160">
    <molecule id="Q9WVB0-1"/>
</dbReference>
<dbReference type="ProteomicsDB" id="255161">
    <molecule id="Q9WVB0-2"/>
</dbReference>
<dbReference type="Pumba" id="Q9WVB0"/>
<dbReference type="Antibodypedia" id="23209">
    <property type="antibodies" value="475 antibodies from 30 providers"/>
</dbReference>
<dbReference type="DNASU" id="19663"/>
<dbReference type="Ensembl" id="ENSMUST00000033995.14">
    <molecule id="Q9WVB0-2"/>
    <property type="protein sequence ID" value="ENSMUSP00000033995.7"/>
    <property type="gene ID" value="ENSMUSG00000031586.18"/>
</dbReference>
<dbReference type="Ensembl" id="ENSMUST00000053251.12">
    <molecule id="Q9WVB0-1"/>
    <property type="protein sequence ID" value="ENSMUSP00000055813.5"/>
    <property type="gene ID" value="ENSMUSG00000031586.18"/>
</dbReference>
<dbReference type="Ensembl" id="ENSMUST00000182987.8">
    <molecule id="Q9WVB0-1"/>
    <property type="protein sequence ID" value="ENSMUSP00000138483.2"/>
    <property type="gene ID" value="ENSMUSG00000031586.18"/>
</dbReference>
<dbReference type="Ensembl" id="ENSMUST00000191473.7">
    <molecule id="Q9WVB0-1"/>
    <property type="protein sequence ID" value="ENSMUSP00000140387.2"/>
    <property type="gene ID" value="ENSMUSG00000031586.18"/>
</dbReference>
<dbReference type="GeneID" id="19663"/>
<dbReference type="KEGG" id="mmu:19663"/>
<dbReference type="UCSC" id="uc009lkk.2">
    <molecule id="Q9WVB0-1"/>
    <property type="organism name" value="mouse"/>
</dbReference>
<dbReference type="UCSC" id="uc009lkn.3">
    <molecule id="Q9WVB0-2"/>
    <property type="organism name" value="mouse"/>
</dbReference>
<dbReference type="AGR" id="MGI:1334446"/>
<dbReference type="CTD" id="11030"/>
<dbReference type="MGI" id="MGI:1334446">
    <property type="gene designation" value="Rbpms"/>
</dbReference>
<dbReference type="VEuPathDB" id="HostDB:ENSMUSG00000031586"/>
<dbReference type="eggNOG" id="KOG1457">
    <property type="taxonomic scope" value="Eukaryota"/>
</dbReference>
<dbReference type="GeneTree" id="ENSGT00940000159617"/>
<dbReference type="InParanoid" id="Q9WVB0"/>
<dbReference type="OMA" id="AQIRWIP"/>
<dbReference type="TreeFam" id="TF351070"/>
<dbReference type="BioGRID-ORCS" id="19663">
    <property type="hits" value="7 hits in 80 CRISPR screens"/>
</dbReference>
<dbReference type="ChiTaRS" id="Rbpms">
    <property type="organism name" value="mouse"/>
</dbReference>
<dbReference type="PRO" id="PR:Q9WVB0"/>
<dbReference type="Proteomes" id="UP000000589">
    <property type="component" value="Chromosome 8"/>
</dbReference>
<dbReference type="RNAct" id="Q9WVB0">
    <property type="molecule type" value="protein"/>
</dbReference>
<dbReference type="Bgee" id="ENSMUSG00000031586">
    <property type="expression patterns" value="Expressed in ascending aorta and 245 other cell types or tissues"/>
</dbReference>
<dbReference type="ExpressionAtlas" id="Q9WVB0">
    <property type="expression patterns" value="baseline and differential"/>
</dbReference>
<dbReference type="GO" id="GO:0010494">
    <property type="term" value="C:cytoplasmic stress granule"/>
    <property type="evidence" value="ECO:0000250"/>
    <property type="project" value="UniProtKB"/>
</dbReference>
<dbReference type="GO" id="GO:0005829">
    <property type="term" value="C:cytosol"/>
    <property type="evidence" value="ECO:0000250"/>
    <property type="project" value="UniProtKB"/>
</dbReference>
<dbReference type="GO" id="GO:0005654">
    <property type="term" value="C:nucleoplasm"/>
    <property type="evidence" value="ECO:0007669"/>
    <property type="project" value="Ensembl"/>
</dbReference>
<dbReference type="GO" id="GO:0005634">
    <property type="term" value="C:nucleus"/>
    <property type="evidence" value="ECO:0000250"/>
    <property type="project" value="UniProtKB"/>
</dbReference>
<dbReference type="GO" id="GO:0000932">
    <property type="term" value="C:P-body"/>
    <property type="evidence" value="ECO:0007669"/>
    <property type="project" value="UniProtKB-SubCell"/>
</dbReference>
<dbReference type="GO" id="GO:0042802">
    <property type="term" value="F:identical protein binding"/>
    <property type="evidence" value="ECO:0000250"/>
    <property type="project" value="UniProtKB"/>
</dbReference>
<dbReference type="GO" id="GO:0060090">
    <property type="term" value="F:molecular adaptor activity"/>
    <property type="evidence" value="ECO:0000250"/>
    <property type="project" value="UniProtKB"/>
</dbReference>
<dbReference type="GO" id="GO:0003730">
    <property type="term" value="F:mRNA 3'-UTR binding"/>
    <property type="evidence" value="ECO:0000250"/>
    <property type="project" value="UniProtKB"/>
</dbReference>
<dbReference type="GO" id="GO:1990715">
    <property type="term" value="F:mRNA CDS binding"/>
    <property type="evidence" value="ECO:0000250"/>
    <property type="project" value="UniProtKB"/>
</dbReference>
<dbReference type="GO" id="GO:0036002">
    <property type="term" value="F:pre-mRNA binding"/>
    <property type="evidence" value="ECO:0000250"/>
    <property type="project" value="UniProtKB"/>
</dbReference>
<dbReference type="GO" id="GO:0097157">
    <property type="term" value="F:pre-mRNA intronic binding"/>
    <property type="evidence" value="ECO:0000250"/>
    <property type="project" value="UniProtKB"/>
</dbReference>
<dbReference type="GO" id="GO:0042803">
    <property type="term" value="F:protein homodimerization activity"/>
    <property type="evidence" value="ECO:0007669"/>
    <property type="project" value="Ensembl"/>
</dbReference>
<dbReference type="GO" id="GO:0003723">
    <property type="term" value="F:RNA binding"/>
    <property type="evidence" value="ECO:0000250"/>
    <property type="project" value="UniProtKB"/>
</dbReference>
<dbReference type="GO" id="GO:0003713">
    <property type="term" value="F:transcription coactivator activity"/>
    <property type="evidence" value="ECO:0000250"/>
    <property type="project" value="UniProtKB"/>
</dbReference>
<dbReference type="GO" id="GO:0065003">
    <property type="term" value="P:protein-containing complex assembly"/>
    <property type="evidence" value="ECO:0000250"/>
    <property type="project" value="UniProtKB"/>
</dbReference>
<dbReference type="GO" id="GO:0000381">
    <property type="term" value="P:regulation of alternative mRNA splicing, via spliceosome"/>
    <property type="evidence" value="ECO:0000250"/>
    <property type="project" value="UniProtKB"/>
</dbReference>
<dbReference type="GO" id="GO:0006979">
    <property type="term" value="P:response to oxidative stress"/>
    <property type="evidence" value="ECO:0000250"/>
    <property type="project" value="UniProtKB"/>
</dbReference>
<dbReference type="GO" id="GO:0060395">
    <property type="term" value="P:SMAD protein signal transduction"/>
    <property type="evidence" value="ECO:0000250"/>
    <property type="project" value="UniProtKB"/>
</dbReference>
<dbReference type="CDD" id="cd12682">
    <property type="entry name" value="RRM_RBPMS"/>
    <property type="match status" value="1"/>
</dbReference>
<dbReference type="FunFam" id="3.30.70.330:FF:000037">
    <property type="entry name" value="RNA-binding protein with multiple splicing 2"/>
    <property type="match status" value="1"/>
</dbReference>
<dbReference type="Gene3D" id="3.30.70.330">
    <property type="match status" value="1"/>
</dbReference>
<dbReference type="InterPro" id="IPR012677">
    <property type="entry name" value="Nucleotide-bd_a/b_plait_sf"/>
</dbReference>
<dbReference type="InterPro" id="IPR035979">
    <property type="entry name" value="RBD_domain_sf"/>
</dbReference>
<dbReference type="InterPro" id="IPR000504">
    <property type="entry name" value="RRM_dom"/>
</dbReference>
<dbReference type="PANTHER" id="PTHR10501">
    <property type="entry name" value="U1 SMALL NUCLEAR RIBONUCLEOPROTEIN A/U2 SMALL NUCLEAR RIBONUCLEOPROTEIN B"/>
    <property type="match status" value="1"/>
</dbReference>
<dbReference type="Pfam" id="PF00076">
    <property type="entry name" value="RRM_1"/>
    <property type="match status" value="1"/>
</dbReference>
<dbReference type="SMART" id="SM00360">
    <property type="entry name" value="RRM"/>
    <property type="match status" value="1"/>
</dbReference>
<dbReference type="SUPFAM" id="SSF54928">
    <property type="entry name" value="RNA-binding domain, RBD"/>
    <property type="match status" value="1"/>
</dbReference>
<dbReference type="PROSITE" id="PS50102">
    <property type="entry name" value="RRM"/>
    <property type="match status" value="1"/>
</dbReference>
<name>RBPMS_MOUSE</name>